<evidence type="ECO:0000255" key="1">
    <source>
        <dbReference type="HAMAP-Rule" id="MF_01322"/>
    </source>
</evidence>
<evidence type="ECO:0000305" key="2"/>
<name>RPOC_XANCP</name>
<sequence>MKDLLNLFNQQRQTLDFDAIKIALASPDLIRSWSYGEVKKPETINYRTFKPERDGLFCAAIFGPIKDYECLCGKYKRMKHRGVVCEKCGTEVTLAKVRRERMGHIDLASPVAHIWFLKSLPSRIGLMLDMTLRDIERVLYFEAYVVTEPGLTPLERRQLLTEEQYLTARQEYNDDFDAAMGAEAVYELLRTIDLQSEMTRLREEIASTGSETKLKRLTKRIKLIEAFLESGNRPEWMVMTVLPVLPPDLRPLVPLDGGRFATSDLNDLYRRVINRNNRLRRLLELNAPDIIVRNEKRMLQESVDALLDNGRRGRAITGTNKRPLKSLADMIKGKQGRFRQNLLGKRVDYSGRSVITVGPYLKLHQCGLPKKMALELFKPFVFAKLQRRGLATTIKAAKKLVEREEAEVWDILEEVIREHPVLLNRAPTLHRLGIQAFEPVLIEGKAIQLHPLVCTAFNADFDGDQMAVHVPLSLEAQLEARALMMSTNNILSPANGEPIIVPSQDVVLGLYYMSRALENKKGEGMVFANTSEVKRAYDNRVVELHAKVKVRITQVDVDTVDGKRTSGTSIVDTTVGRALLSEILPEGLPFQLANTEMTKKNISRLINSSYRLLGLKDTVVFADKLMYTGYAYATRAGVSIGIDDMLIPDEKKGILTEAEAEVLEIQEQYQSGLVTAGERYNKVVDIWSRTSERIAKAMMDTIGTEKVENAKGETIDQKSMNSLYIMADSGARGSQAQIRQLAGMRGLMARPDGSIIETPIKANFREGLNVQEYFNSTHGARKGLADTALKTANSGYLTRRLVDVAQDVVITEVDCGTTEGLIMTPIVEGGDVVEPLKERVLGRVVAEDVYLPGNDEEPIVTRNTLLDEAWVAKLEDASVQSVKVRSTISCESSFGVCARCYGRDLARGHQVNIGEAVGVIAAQSIGEPGTQLTMRTFHIGGAASRAAAVDNITVKTTGSVKFNNLKSVAHASGALVAVSRSGELSVLDGHGRERERYKLPYGATITAKDGDAVKAGQAVANWDPHNHPIVSEVAGFIRFIDFVDGVTVIEKTDELTGLASREITDPKRRGAQAKELRPIVRIVDAKGNDLTIPNTDLPAQYLLPPRSIVNLQDGAAVGVGDVVAKIPQEASKTRDITGGLPRVADLFEARKPKDPAILAERSGIISFGKDTKGKQRLIIKDTDGSEHEELIPKYRQIIVFEGEHVTKGETVVDGEPSPQDILRLLGVEPLAAYLVKEIQDVYRLQGVKINDKHIEVITRQMLRKVEITDQGNSKFLNGEQVERQRVIEENARLVTRNELPAKYDPVLLGITKASLATESFISAASFQETTRVLTEAAVRGTRDNLRGLKENVIVGRLIPAGTGLAYHAGRRKASGLTDSEMETLSGKPAVVEPVATVADAGADEE</sequence>
<keyword id="KW-0240">DNA-directed RNA polymerase</keyword>
<keyword id="KW-0460">Magnesium</keyword>
<keyword id="KW-0479">Metal-binding</keyword>
<keyword id="KW-0548">Nucleotidyltransferase</keyword>
<keyword id="KW-1185">Reference proteome</keyword>
<keyword id="KW-0804">Transcription</keyword>
<keyword id="KW-0808">Transferase</keyword>
<keyword id="KW-0862">Zinc</keyword>
<gene>
    <name evidence="1" type="primary">rpoC</name>
    <name type="ordered locus">XCC0889</name>
</gene>
<comment type="function">
    <text evidence="1">DNA-dependent RNA polymerase catalyzes the transcription of DNA into RNA using the four ribonucleoside triphosphates as substrates.</text>
</comment>
<comment type="catalytic activity">
    <reaction evidence="1">
        <text>RNA(n) + a ribonucleoside 5'-triphosphate = RNA(n+1) + diphosphate</text>
        <dbReference type="Rhea" id="RHEA:21248"/>
        <dbReference type="Rhea" id="RHEA-COMP:14527"/>
        <dbReference type="Rhea" id="RHEA-COMP:17342"/>
        <dbReference type="ChEBI" id="CHEBI:33019"/>
        <dbReference type="ChEBI" id="CHEBI:61557"/>
        <dbReference type="ChEBI" id="CHEBI:140395"/>
        <dbReference type="EC" id="2.7.7.6"/>
    </reaction>
</comment>
<comment type="cofactor">
    <cofactor evidence="1">
        <name>Mg(2+)</name>
        <dbReference type="ChEBI" id="CHEBI:18420"/>
    </cofactor>
    <text evidence="1">Binds 1 Mg(2+) ion per subunit.</text>
</comment>
<comment type="cofactor">
    <cofactor evidence="1">
        <name>Zn(2+)</name>
        <dbReference type="ChEBI" id="CHEBI:29105"/>
    </cofactor>
    <text evidence="1">Binds 2 Zn(2+) ions per subunit.</text>
</comment>
<comment type="subunit">
    <text evidence="1">The RNAP catalytic core consists of 2 alpha, 1 beta, 1 beta' and 1 omega subunit. When a sigma factor is associated with the core the holoenzyme is formed, which can initiate transcription.</text>
</comment>
<comment type="similarity">
    <text evidence="1">Belongs to the RNA polymerase beta' chain family.</text>
</comment>
<feature type="chain" id="PRO_0000067835" description="DNA-directed RNA polymerase subunit beta'">
    <location>
        <begin position="1"/>
        <end position="1405"/>
    </location>
</feature>
<feature type="binding site" evidence="1">
    <location>
        <position position="70"/>
    </location>
    <ligand>
        <name>Zn(2+)</name>
        <dbReference type="ChEBI" id="CHEBI:29105"/>
        <label>1</label>
    </ligand>
</feature>
<feature type="binding site" evidence="1">
    <location>
        <position position="72"/>
    </location>
    <ligand>
        <name>Zn(2+)</name>
        <dbReference type="ChEBI" id="CHEBI:29105"/>
        <label>1</label>
    </ligand>
</feature>
<feature type="binding site" evidence="1">
    <location>
        <position position="85"/>
    </location>
    <ligand>
        <name>Zn(2+)</name>
        <dbReference type="ChEBI" id="CHEBI:29105"/>
        <label>1</label>
    </ligand>
</feature>
<feature type="binding site" evidence="1">
    <location>
        <position position="88"/>
    </location>
    <ligand>
        <name>Zn(2+)</name>
        <dbReference type="ChEBI" id="CHEBI:29105"/>
        <label>1</label>
    </ligand>
</feature>
<feature type="binding site" evidence="1">
    <location>
        <position position="460"/>
    </location>
    <ligand>
        <name>Mg(2+)</name>
        <dbReference type="ChEBI" id="CHEBI:18420"/>
    </ligand>
</feature>
<feature type="binding site" evidence="1">
    <location>
        <position position="462"/>
    </location>
    <ligand>
        <name>Mg(2+)</name>
        <dbReference type="ChEBI" id="CHEBI:18420"/>
    </ligand>
</feature>
<feature type="binding site" evidence="1">
    <location>
        <position position="464"/>
    </location>
    <ligand>
        <name>Mg(2+)</name>
        <dbReference type="ChEBI" id="CHEBI:18420"/>
    </ligand>
</feature>
<feature type="binding site" evidence="1">
    <location>
        <position position="815"/>
    </location>
    <ligand>
        <name>Zn(2+)</name>
        <dbReference type="ChEBI" id="CHEBI:29105"/>
        <label>2</label>
    </ligand>
</feature>
<feature type="binding site" evidence="1">
    <location>
        <position position="890"/>
    </location>
    <ligand>
        <name>Zn(2+)</name>
        <dbReference type="ChEBI" id="CHEBI:29105"/>
        <label>2</label>
    </ligand>
</feature>
<feature type="binding site" evidence="1">
    <location>
        <position position="897"/>
    </location>
    <ligand>
        <name>Zn(2+)</name>
        <dbReference type="ChEBI" id="CHEBI:29105"/>
        <label>2</label>
    </ligand>
</feature>
<feature type="binding site" evidence="1">
    <location>
        <position position="900"/>
    </location>
    <ligand>
        <name>Zn(2+)</name>
        <dbReference type="ChEBI" id="CHEBI:29105"/>
        <label>2</label>
    </ligand>
</feature>
<feature type="sequence conflict" description="In Ref. 2; AAL74151." evidence="2" ref="2">
    <original>T</original>
    <variation>S</variation>
    <location>
        <position position="218"/>
    </location>
</feature>
<feature type="sequence conflict" description="In Ref. 2; AAL74151." evidence="2" ref="2">
    <original>R</original>
    <variation>H</variation>
    <location>
        <position position="275"/>
    </location>
</feature>
<feature type="sequence conflict" description="In Ref. 2; AAL74151." evidence="2" ref="2">
    <original>ID</original>
    <variation>HH</variation>
    <location>
        <begin position="1040"/>
        <end position="1041"/>
    </location>
</feature>
<feature type="sequence conflict" description="In Ref. 2; AAL74151." evidence="2" ref="2">
    <original>AV</original>
    <variation>G</variation>
    <location>
        <begin position="1116"/>
        <end position="1117"/>
    </location>
</feature>
<feature type="sequence conflict" description="In Ref. 2; AAL74151." evidence="2" ref="2">
    <original>DV</original>
    <variation>EL</variation>
    <location>
        <begin position="1121"/>
        <end position="1122"/>
    </location>
</feature>
<feature type="sequence conflict" description="In Ref. 2; AAL74151." evidence="2" ref="2">
    <original>KG</original>
    <variation>RA</variation>
    <location>
        <begin position="1207"/>
        <end position="1208"/>
    </location>
</feature>
<feature type="sequence conflict" description="In Ref. 2; AAL74151." evidence="2" ref="2">
    <original>P</original>
    <variation>R</variation>
    <location>
        <position position="1229"/>
    </location>
</feature>
<feature type="sequence conflict" description="In Ref. 2; AAL74151." evidence="2" ref="2">
    <original>RGTRDNL</original>
    <variation>PRGLLE</variation>
    <location>
        <begin position="1339"/>
        <end position="1345"/>
    </location>
</feature>
<feature type="sequence conflict" description="In Ref. 2; AAL74151." evidence="2" ref="2">
    <original>V</original>
    <variation>A</variation>
    <location>
        <position position="1391"/>
    </location>
</feature>
<protein>
    <recommendedName>
        <fullName evidence="1">DNA-directed RNA polymerase subunit beta'</fullName>
        <shortName evidence="1">RNAP subunit beta'</shortName>
        <ecNumber evidence="1">2.7.7.6</ecNumber>
    </recommendedName>
    <alternativeName>
        <fullName evidence="1">RNA polymerase subunit beta'</fullName>
    </alternativeName>
    <alternativeName>
        <fullName evidence="1">Transcriptase subunit beta'</fullName>
    </alternativeName>
</protein>
<organism>
    <name type="scientific">Xanthomonas campestris pv. campestris (strain ATCC 33913 / DSM 3586 / NCPPB 528 / LMG 568 / P 25)</name>
    <dbReference type="NCBI Taxonomy" id="190485"/>
    <lineage>
        <taxon>Bacteria</taxon>
        <taxon>Pseudomonadati</taxon>
        <taxon>Pseudomonadota</taxon>
        <taxon>Gammaproteobacteria</taxon>
        <taxon>Lysobacterales</taxon>
        <taxon>Lysobacteraceae</taxon>
        <taxon>Xanthomonas</taxon>
    </lineage>
</organism>
<dbReference type="EC" id="2.7.7.6" evidence="1"/>
<dbReference type="EMBL" id="AE008922">
    <property type="protein sequence ID" value="AAM40199.1"/>
    <property type="molecule type" value="Genomic_DNA"/>
</dbReference>
<dbReference type="EMBL" id="AF426389">
    <property type="protein sequence ID" value="AAL74151.1"/>
    <property type="molecule type" value="Genomic_DNA"/>
</dbReference>
<dbReference type="RefSeq" id="NP_636275.1">
    <property type="nucleotide sequence ID" value="NC_003902.1"/>
</dbReference>
<dbReference type="RefSeq" id="WP_011036119.1">
    <property type="nucleotide sequence ID" value="NC_003902.1"/>
</dbReference>
<dbReference type="SMR" id="Q8PC55"/>
<dbReference type="STRING" id="190485.XCC0889"/>
<dbReference type="EnsemblBacteria" id="AAM40199">
    <property type="protein sequence ID" value="AAM40199"/>
    <property type="gene ID" value="XCC0889"/>
</dbReference>
<dbReference type="KEGG" id="xcc:XCC0889"/>
<dbReference type="PATRIC" id="fig|190485.4.peg.960"/>
<dbReference type="eggNOG" id="COG0086">
    <property type="taxonomic scope" value="Bacteria"/>
</dbReference>
<dbReference type="HOGENOM" id="CLU_000524_3_1_6"/>
<dbReference type="OrthoDB" id="9815296at2"/>
<dbReference type="BRENDA" id="2.7.7.6">
    <property type="organism ID" value="6708"/>
</dbReference>
<dbReference type="Proteomes" id="UP000001010">
    <property type="component" value="Chromosome"/>
</dbReference>
<dbReference type="GO" id="GO:0000428">
    <property type="term" value="C:DNA-directed RNA polymerase complex"/>
    <property type="evidence" value="ECO:0007669"/>
    <property type="project" value="UniProtKB-KW"/>
</dbReference>
<dbReference type="GO" id="GO:0003677">
    <property type="term" value="F:DNA binding"/>
    <property type="evidence" value="ECO:0007669"/>
    <property type="project" value="UniProtKB-UniRule"/>
</dbReference>
<dbReference type="GO" id="GO:0003899">
    <property type="term" value="F:DNA-directed RNA polymerase activity"/>
    <property type="evidence" value="ECO:0007669"/>
    <property type="project" value="UniProtKB-UniRule"/>
</dbReference>
<dbReference type="GO" id="GO:0000287">
    <property type="term" value="F:magnesium ion binding"/>
    <property type="evidence" value="ECO:0007669"/>
    <property type="project" value="UniProtKB-UniRule"/>
</dbReference>
<dbReference type="GO" id="GO:0008270">
    <property type="term" value="F:zinc ion binding"/>
    <property type="evidence" value="ECO:0007669"/>
    <property type="project" value="UniProtKB-UniRule"/>
</dbReference>
<dbReference type="GO" id="GO:0006351">
    <property type="term" value="P:DNA-templated transcription"/>
    <property type="evidence" value="ECO:0007669"/>
    <property type="project" value="UniProtKB-UniRule"/>
</dbReference>
<dbReference type="CDD" id="cd02655">
    <property type="entry name" value="RNAP_beta'_C"/>
    <property type="match status" value="1"/>
</dbReference>
<dbReference type="CDD" id="cd01609">
    <property type="entry name" value="RNAP_beta'_N"/>
    <property type="match status" value="1"/>
</dbReference>
<dbReference type="FunFam" id="1.10.132.30:FF:000003">
    <property type="entry name" value="DNA-directed RNA polymerase subunit beta"/>
    <property type="match status" value="1"/>
</dbReference>
<dbReference type="FunFam" id="1.10.150.390:FF:000002">
    <property type="entry name" value="DNA-directed RNA polymerase subunit beta"/>
    <property type="match status" value="1"/>
</dbReference>
<dbReference type="Gene3D" id="1.10.132.30">
    <property type="match status" value="1"/>
</dbReference>
<dbReference type="Gene3D" id="1.10.150.390">
    <property type="match status" value="1"/>
</dbReference>
<dbReference type="Gene3D" id="1.10.1790.20">
    <property type="match status" value="1"/>
</dbReference>
<dbReference type="Gene3D" id="1.10.40.90">
    <property type="match status" value="1"/>
</dbReference>
<dbReference type="Gene3D" id="2.40.40.20">
    <property type="match status" value="1"/>
</dbReference>
<dbReference type="Gene3D" id="2.40.50.100">
    <property type="match status" value="3"/>
</dbReference>
<dbReference type="Gene3D" id="4.10.860.120">
    <property type="entry name" value="RNA polymerase II, clamp domain"/>
    <property type="match status" value="1"/>
</dbReference>
<dbReference type="Gene3D" id="1.10.274.100">
    <property type="entry name" value="RNA polymerase Rpb1, domain 3"/>
    <property type="match status" value="2"/>
</dbReference>
<dbReference type="HAMAP" id="MF_01322">
    <property type="entry name" value="RNApol_bact_RpoC"/>
    <property type="match status" value="1"/>
</dbReference>
<dbReference type="InterPro" id="IPR045867">
    <property type="entry name" value="DNA-dir_RpoC_beta_prime"/>
</dbReference>
<dbReference type="InterPro" id="IPR012754">
    <property type="entry name" value="DNA-dir_RpoC_beta_prime_bact"/>
</dbReference>
<dbReference type="InterPro" id="IPR000722">
    <property type="entry name" value="RNA_pol_asu"/>
</dbReference>
<dbReference type="InterPro" id="IPR006592">
    <property type="entry name" value="RNA_pol_N"/>
</dbReference>
<dbReference type="InterPro" id="IPR007080">
    <property type="entry name" value="RNA_pol_Rpb1_1"/>
</dbReference>
<dbReference type="InterPro" id="IPR007066">
    <property type="entry name" value="RNA_pol_Rpb1_3"/>
</dbReference>
<dbReference type="InterPro" id="IPR042102">
    <property type="entry name" value="RNA_pol_Rpb1_3_sf"/>
</dbReference>
<dbReference type="InterPro" id="IPR007083">
    <property type="entry name" value="RNA_pol_Rpb1_4"/>
</dbReference>
<dbReference type="InterPro" id="IPR007081">
    <property type="entry name" value="RNA_pol_Rpb1_5"/>
</dbReference>
<dbReference type="InterPro" id="IPR044893">
    <property type="entry name" value="RNA_pol_Rpb1_clamp_domain"/>
</dbReference>
<dbReference type="InterPro" id="IPR038120">
    <property type="entry name" value="Rpb1_funnel_sf"/>
</dbReference>
<dbReference type="NCBIfam" id="TIGR02386">
    <property type="entry name" value="rpoC_TIGR"/>
    <property type="match status" value="1"/>
</dbReference>
<dbReference type="PANTHER" id="PTHR19376">
    <property type="entry name" value="DNA-DIRECTED RNA POLYMERASE"/>
    <property type="match status" value="1"/>
</dbReference>
<dbReference type="PANTHER" id="PTHR19376:SF54">
    <property type="entry name" value="DNA-DIRECTED RNA POLYMERASE SUBUNIT BETA"/>
    <property type="match status" value="1"/>
</dbReference>
<dbReference type="Pfam" id="PF04997">
    <property type="entry name" value="RNA_pol_Rpb1_1"/>
    <property type="match status" value="1"/>
</dbReference>
<dbReference type="Pfam" id="PF00623">
    <property type="entry name" value="RNA_pol_Rpb1_2"/>
    <property type="match status" value="2"/>
</dbReference>
<dbReference type="Pfam" id="PF04983">
    <property type="entry name" value="RNA_pol_Rpb1_3"/>
    <property type="match status" value="1"/>
</dbReference>
<dbReference type="Pfam" id="PF05000">
    <property type="entry name" value="RNA_pol_Rpb1_4"/>
    <property type="match status" value="1"/>
</dbReference>
<dbReference type="Pfam" id="PF04998">
    <property type="entry name" value="RNA_pol_Rpb1_5"/>
    <property type="match status" value="1"/>
</dbReference>
<dbReference type="SMART" id="SM00663">
    <property type="entry name" value="RPOLA_N"/>
    <property type="match status" value="1"/>
</dbReference>
<dbReference type="SUPFAM" id="SSF64484">
    <property type="entry name" value="beta and beta-prime subunits of DNA dependent RNA-polymerase"/>
    <property type="match status" value="1"/>
</dbReference>
<reference key="1">
    <citation type="journal article" date="2002" name="Nature">
        <title>Comparison of the genomes of two Xanthomonas pathogens with differing host specificities.</title>
        <authorList>
            <person name="da Silva A.C.R."/>
            <person name="Ferro J.A."/>
            <person name="Reinach F.C."/>
            <person name="Farah C.S."/>
            <person name="Furlan L.R."/>
            <person name="Quaggio R.B."/>
            <person name="Monteiro-Vitorello C.B."/>
            <person name="Van Sluys M.A."/>
            <person name="Almeida N.F. Jr."/>
            <person name="Alves L.M.C."/>
            <person name="do Amaral A.M."/>
            <person name="Bertolini M.C."/>
            <person name="Camargo L.E.A."/>
            <person name="Camarotte G."/>
            <person name="Cannavan F."/>
            <person name="Cardozo J."/>
            <person name="Chambergo F."/>
            <person name="Ciapina L.P."/>
            <person name="Cicarelli R.M.B."/>
            <person name="Coutinho L.L."/>
            <person name="Cursino-Santos J.R."/>
            <person name="El-Dorry H."/>
            <person name="Faria J.B."/>
            <person name="Ferreira A.J.S."/>
            <person name="Ferreira R.C.C."/>
            <person name="Ferro M.I.T."/>
            <person name="Formighieri E.F."/>
            <person name="Franco M.C."/>
            <person name="Greggio C.C."/>
            <person name="Gruber A."/>
            <person name="Katsuyama A.M."/>
            <person name="Kishi L.T."/>
            <person name="Leite R.P."/>
            <person name="Lemos E.G.M."/>
            <person name="Lemos M.V.F."/>
            <person name="Locali E.C."/>
            <person name="Machado M.A."/>
            <person name="Madeira A.M.B.N."/>
            <person name="Martinez-Rossi N.M."/>
            <person name="Martins E.C."/>
            <person name="Meidanis J."/>
            <person name="Menck C.F.M."/>
            <person name="Miyaki C.Y."/>
            <person name="Moon D.H."/>
            <person name="Moreira L.M."/>
            <person name="Novo M.T.M."/>
            <person name="Okura V.K."/>
            <person name="Oliveira M.C."/>
            <person name="Oliveira V.R."/>
            <person name="Pereira H.A."/>
            <person name="Rossi A."/>
            <person name="Sena J.A.D."/>
            <person name="Silva C."/>
            <person name="de Souza R.F."/>
            <person name="Spinola L.A.F."/>
            <person name="Takita M.A."/>
            <person name="Tamura R.E."/>
            <person name="Teixeira E.C."/>
            <person name="Tezza R.I.D."/>
            <person name="Trindade dos Santos M."/>
            <person name="Truffi D."/>
            <person name="Tsai S.M."/>
            <person name="White F.F."/>
            <person name="Setubal J.C."/>
            <person name="Kitajima J.P."/>
        </authorList>
    </citation>
    <scope>NUCLEOTIDE SEQUENCE [LARGE SCALE GENOMIC DNA]</scope>
    <source>
        <strain>ATCC 33913 / DSM 3586 / NCPPB 528 / LMG 568 / P 25</strain>
    </source>
</reference>
<reference key="2">
    <citation type="submission" date="2001-10" db="EMBL/GenBank/DDBJ databases">
        <authorList>
            <person name="Chen S.-J."/>
            <person name="Yang M.-T."/>
        </authorList>
    </citation>
    <scope>NUCLEOTIDE SEQUENCE [GENOMIC DNA]</scope>
</reference>
<proteinExistence type="inferred from homology"/>
<accession>Q8PC55</accession>
<accession>Q8RTK0</accession>